<name>SYGA_XANOM</name>
<protein>
    <recommendedName>
        <fullName evidence="1">Glycine--tRNA ligase alpha subunit</fullName>
        <ecNumber evidence="1">6.1.1.14</ecNumber>
    </recommendedName>
    <alternativeName>
        <fullName evidence="1">Glycyl-tRNA synthetase alpha subunit</fullName>
        <shortName evidence="1">GlyRS</shortName>
    </alternativeName>
</protein>
<sequence>MSDSRRVPITFQGLIQTLNQYWAEQGCVLIQPLDLEVGAGTFHPATFLRALGPEPWNAAYVQPSRRPTDGRYGENPNRLQRYYQYQVAMKPNPDNIQDLYLGSLQALGIDPLVHDLRFVEDNWESPTLGAWGLGWEVWLNGMEVTQFTYFQQAGGLECKPVLGEITYGLERLCMYLQRCDNVYALVWTYGPDGAAVTYGDVYHQNEVEQSTYNFEHANVAELFHRFDACEAEAKHLVEVGLPLPAYEQVSKASHAFNLLDARRAISVTERQRYILRVRALAQGVAQAYYAQREKLGFPGVKQ</sequence>
<gene>
    <name evidence="1" type="primary">glyQ</name>
    <name type="ordered locus">XOO4143</name>
</gene>
<reference key="1">
    <citation type="journal article" date="2005" name="Jpn. Agric. Res. Q.">
        <title>Genome sequence of Xanthomonas oryzae pv. oryzae suggests contribution of large numbers of effector genes and insertion sequences to its race diversity.</title>
        <authorList>
            <person name="Ochiai H."/>
            <person name="Inoue Y."/>
            <person name="Takeya M."/>
            <person name="Sasaki A."/>
            <person name="Kaku H."/>
        </authorList>
    </citation>
    <scope>NUCLEOTIDE SEQUENCE [LARGE SCALE GENOMIC DNA]</scope>
    <source>
        <strain>MAFF 311018</strain>
    </source>
</reference>
<organism>
    <name type="scientific">Xanthomonas oryzae pv. oryzae (strain MAFF 311018)</name>
    <dbReference type="NCBI Taxonomy" id="342109"/>
    <lineage>
        <taxon>Bacteria</taxon>
        <taxon>Pseudomonadati</taxon>
        <taxon>Pseudomonadota</taxon>
        <taxon>Gammaproteobacteria</taxon>
        <taxon>Lysobacterales</taxon>
        <taxon>Lysobacteraceae</taxon>
        <taxon>Xanthomonas</taxon>
    </lineage>
</organism>
<dbReference type="EC" id="6.1.1.14" evidence="1"/>
<dbReference type="EMBL" id="AP008229">
    <property type="protein sequence ID" value="BAE70898.1"/>
    <property type="molecule type" value="Genomic_DNA"/>
</dbReference>
<dbReference type="RefSeq" id="WP_011409708.1">
    <property type="nucleotide sequence ID" value="NC_007705.1"/>
</dbReference>
<dbReference type="SMR" id="Q2NXS9"/>
<dbReference type="KEGG" id="xom:XOO4143"/>
<dbReference type="HOGENOM" id="CLU_057066_1_0_6"/>
<dbReference type="GO" id="GO:0005829">
    <property type="term" value="C:cytosol"/>
    <property type="evidence" value="ECO:0007669"/>
    <property type="project" value="TreeGrafter"/>
</dbReference>
<dbReference type="GO" id="GO:0005524">
    <property type="term" value="F:ATP binding"/>
    <property type="evidence" value="ECO:0007669"/>
    <property type="project" value="UniProtKB-UniRule"/>
</dbReference>
<dbReference type="GO" id="GO:0004820">
    <property type="term" value="F:glycine-tRNA ligase activity"/>
    <property type="evidence" value="ECO:0007669"/>
    <property type="project" value="UniProtKB-UniRule"/>
</dbReference>
<dbReference type="GO" id="GO:0006426">
    <property type="term" value="P:glycyl-tRNA aminoacylation"/>
    <property type="evidence" value="ECO:0007669"/>
    <property type="project" value="UniProtKB-UniRule"/>
</dbReference>
<dbReference type="CDD" id="cd00733">
    <property type="entry name" value="GlyRS_alpha_core"/>
    <property type="match status" value="1"/>
</dbReference>
<dbReference type="FunFam" id="3.30.930.10:FF:000006">
    <property type="entry name" value="Glycine--tRNA ligase alpha subunit"/>
    <property type="match status" value="1"/>
</dbReference>
<dbReference type="Gene3D" id="3.30.930.10">
    <property type="entry name" value="Bira Bifunctional Protein, Domain 2"/>
    <property type="match status" value="1"/>
</dbReference>
<dbReference type="Gene3D" id="1.20.58.180">
    <property type="entry name" value="Class II aaRS and biotin synthetases, domain 2"/>
    <property type="match status" value="1"/>
</dbReference>
<dbReference type="HAMAP" id="MF_00254">
    <property type="entry name" value="Gly_tRNA_synth_alpha"/>
    <property type="match status" value="1"/>
</dbReference>
<dbReference type="InterPro" id="IPR045864">
    <property type="entry name" value="aa-tRNA-synth_II/BPL/LPL"/>
</dbReference>
<dbReference type="InterPro" id="IPR006194">
    <property type="entry name" value="Gly-tRNA-synth_heterodimer"/>
</dbReference>
<dbReference type="InterPro" id="IPR002310">
    <property type="entry name" value="Gly-tRNA_ligase_asu"/>
</dbReference>
<dbReference type="NCBIfam" id="TIGR00388">
    <property type="entry name" value="glyQ"/>
    <property type="match status" value="1"/>
</dbReference>
<dbReference type="NCBIfam" id="NF006827">
    <property type="entry name" value="PRK09348.1"/>
    <property type="match status" value="1"/>
</dbReference>
<dbReference type="PANTHER" id="PTHR30075:SF2">
    <property type="entry name" value="GLYCINE--TRNA LIGASE, CHLOROPLASTIC_MITOCHONDRIAL 2"/>
    <property type="match status" value="1"/>
</dbReference>
<dbReference type="PANTHER" id="PTHR30075">
    <property type="entry name" value="GLYCYL-TRNA SYNTHETASE"/>
    <property type="match status" value="1"/>
</dbReference>
<dbReference type="Pfam" id="PF02091">
    <property type="entry name" value="tRNA-synt_2e"/>
    <property type="match status" value="1"/>
</dbReference>
<dbReference type="PRINTS" id="PR01044">
    <property type="entry name" value="TRNASYNTHGA"/>
</dbReference>
<dbReference type="SUPFAM" id="SSF55681">
    <property type="entry name" value="Class II aaRS and biotin synthetases"/>
    <property type="match status" value="1"/>
</dbReference>
<dbReference type="PROSITE" id="PS50861">
    <property type="entry name" value="AA_TRNA_LIGASE_II_GLYAB"/>
    <property type="match status" value="1"/>
</dbReference>
<feature type="chain" id="PRO_1000047531" description="Glycine--tRNA ligase alpha subunit">
    <location>
        <begin position="1"/>
        <end position="302"/>
    </location>
</feature>
<keyword id="KW-0030">Aminoacyl-tRNA synthetase</keyword>
<keyword id="KW-0067">ATP-binding</keyword>
<keyword id="KW-0963">Cytoplasm</keyword>
<keyword id="KW-0436">Ligase</keyword>
<keyword id="KW-0547">Nucleotide-binding</keyword>
<keyword id="KW-0648">Protein biosynthesis</keyword>
<proteinExistence type="inferred from homology"/>
<accession>Q2NXS9</accession>
<evidence type="ECO:0000255" key="1">
    <source>
        <dbReference type="HAMAP-Rule" id="MF_00254"/>
    </source>
</evidence>
<comment type="catalytic activity">
    <reaction evidence="1">
        <text>tRNA(Gly) + glycine + ATP = glycyl-tRNA(Gly) + AMP + diphosphate</text>
        <dbReference type="Rhea" id="RHEA:16013"/>
        <dbReference type="Rhea" id="RHEA-COMP:9664"/>
        <dbReference type="Rhea" id="RHEA-COMP:9683"/>
        <dbReference type="ChEBI" id="CHEBI:30616"/>
        <dbReference type="ChEBI" id="CHEBI:33019"/>
        <dbReference type="ChEBI" id="CHEBI:57305"/>
        <dbReference type="ChEBI" id="CHEBI:78442"/>
        <dbReference type="ChEBI" id="CHEBI:78522"/>
        <dbReference type="ChEBI" id="CHEBI:456215"/>
        <dbReference type="EC" id="6.1.1.14"/>
    </reaction>
</comment>
<comment type="subunit">
    <text evidence="1">Tetramer of two alpha and two beta subunits.</text>
</comment>
<comment type="subcellular location">
    <subcellularLocation>
        <location evidence="1">Cytoplasm</location>
    </subcellularLocation>
</comment>
<comment type="similarity">
    <text evidence="1">Belongs to the class-II aminoacyl-tRNA synthetase family.</text>
</comment>